<comment type="function">
    <text evidence="1">This protein binds to the 23S rRNA, and is important in its secondary structure. It is located near the subunit interface in the base of the L7/L12 stalk, and near the tRNA binding site of the peptidyltransferase center.</text>
</comment>
<comment type="subunit">
    <text evidence="1">Part of the 50S ribosomal subunit.</text>
</comment>
<comment type="similarity">
    <text evidence="1">Belongs to the universal ribosomal protein uL6 family.</text>
</comment>
<reference key="1">
    <citation type="submission" date="2008-04" db="EMBL/GenBank/DDBJ databases">
        <title>Complete sequence of chromosome of Methylobacterium populi BJ001.</title>
        <authorList>
            <consortium name="US DOE Joint Genome Institute"/>
            <person name="Copeland A."/>
            <person name="Lucas S."/>
            <person name="Lapidus A."/>
            <person name="Glavina del Rio T."/>
            <person name="Dalin E."/>
            <person name="Tice H."/>
            <person name="Bruce D."/>
            <person name="Goodwin L."/>
            <person name="Pitluck S."/>
            <person name="Chertkov O."/>
            <person name="Brettin T."/>
            <person name="Detter J.C."/>
            <person name="Han C."/>
            <person name="Kuske C.R."/>
            <person name="Schmutz J."/>
            <person name="Larimer F."/>
            <person name="Land M."/>
            <person name="Hauser L."/>
            <person name="Kyrpides N."/>
            <person name="Mikhailova N."/>
            <person name="Marx C."/>
            <person name="Richardson P."/>
        </authorList>
    </citation>
    <scope>NUCLEOTIDE SEQUENCE [LARGE SCALE GENOMIC DNA]</scope>
    <source>
        <strain>ATCC BAA-705 / NCIMB 13946 / BJ001</strain>
    </source>
</reference>
<dbReference type="EMBL" id="CP001029">
    <property type="protein sequence ID" value="ACB80311.1"/>
    <property type="molecule type" value="Genomic_DNA"/>
</dbReference>
<dbReference type="RefSeq" id="WP_012454046.1">
    <property type="nucleotide sequence ID" value="NC_010725.1"/>
</dbReference>
<dbReference type="SMR" id="B1Z778"/>
<dbReference type="STRING" id="441620.Mpop_2149"/>
<dbReference type="KEGG" id="mpo:Mpop_2149"/>
<dbReference type="eggNOG" id="COG0097">
    <property type="taxonomic scope" value="Bacteria"/>
</dbReference>
<dbReference type="HOGENOM" id="CLU_065464_1_2_5"/>
<dbReference type="OrthoDB" id="9805007at2"/>
<dbReference type="Proteomes" id="UP000007136">
    <property type="component" value="Chromosome"/>
</dbReference>
<dbReference type="GO" id="GO:0022625">
    <property type="term" value="C:cytosolic large ribosomal subunit"/>
    <property type="evidence" value="ECO:0007669"/>
    <property type="project" value="TreeGrafter"/>
</dbReference>
<dbReference type="GO" id="GO:0019843">
    <property type="term" value="F:rRNA binding"/>
    <property type="evidence" value="ECO:0007669"/>
    <property type="project" value="UniProtKB-UniRule"/>
</dbReference>
<dbReference type="GO" id="GO:0003735">
    <property type="term" value="F:structural constituent of ribosome"/>
    <property type="evidence" value="ECO:0007669"/>
    <property type="project" value="InterPro"/>
</dbReference>
<dbReference type="GO" id="GO:0002181">
    <property type="term" value="P:cytoplasmic translation"/>
    <property type="evidence" value="ECO:0007669"/>
    <property type="project" value="TreeGrafter"/>
</dbReference>
<dbReference type="FunFam" id="3.90.930.12:FF:000001">
    <property type="entry name" value="50S ribosomal protein L6"/>
    <property type="match status" value="1"/>
</dbReference>
<dbReference type="FunFam" id="3.90.930.12:FF:000002">
    <property type="entry name" value="50S ribosomal protein L6"/>
    <property type="match status" value="1"/>
</dbReference>
<dbReference type="Gene3D" id="3.90.930.12">
    <property type="entry name" value="Ribosomal protein L6, alpha-beta domain"/>
    <property type="match status" value="2"/>
</dbReference>
<dbReference type="HAMAP" id="MF_01365_B">
    <property type="entry name" value="Ribosomal_uL6_B"/>
    <property type="match status" value="1"/>
</dbReference>
<dbReference type="InterPro" id="IPR000702">
    <property type="entry name" value="Ribosomal_uL6-like"/>
</dbReference>
<dbReference type="InterPro" id="IPR036789">
    <property type="entry name" value="Ribosomal_uL6-like_a/b-dom_sf"/>
</dbReference>
<dbReference type="InterPro" id="IPR020040">
    <property type="entry name" value="Ribosomal_uL6_a/b-dom"/>
</dbReference>
<dbReference type="InterPro" id="IPR019906">
    <property type="entry name" value="Ribosomal_uL6_bac-type"/>
</dbReference>
<dbReference type="InterPro" id="IPR002358">
    <property type="entry name" value="Ribosomal_uL6_CS"/>
</dbReference>
<dbReference type="NCBIfam" id="TIGR03654">
    <property type="entry name" value="L6_bact"/>
    <property type="match status" value="1"/>
</dbReference>
<dbReference type="PANTHER" id="PTHR11655">
    <property type="entry name" value="60S/50S RIBOSOMAL PROTEIN L6/L9"/>
    <property type="match status" value="1"/>
</dbReference>
<dbReference type="PANTHER" id="PTHR11655:SF14">
    <property type="entry name" value="LARGE RIBOSOMAL SUBUNIT PROTEIN UL6M"/>
    <property type="match status" value="1"/>
</dbReference>
<dbReference type="Pfam" id="PF00347">
    <property type="entry name" value="Ribosomal_L6"/>
    <property type="match status" value="2"/>
</dbReference>
<dbReference type="PIRSF" id="PIRSF002162">
    <property type="entry name" value="Ribosomal_L6"/>
    <property type="match status" value="1"/>
</dbReference>
<dbReference type="PRINTS" id="PR00059">
    <property type="entry name" value="RIBOSOMALL6"/>
</dbReference>
<dbReference type="SUPFAM" id="SSF56053">
    <property type="entry name" value="Ribosomal protein L6"/>
    <property type="match status" value="2"/>
</dbReference>
<dbReference type="PROSITE" id="PS00525">
    <property type="entry name" value="RIBOSOMAL_L6_1"/>
    <property type="match status" value="1"/>
</dbReference>
<gene>
    <name evidence="1" type="primary">rplF</name>
    <name type="ordered locus">Mpop_2149</name>
</gene>
<evidence type="ECO:0000255" key="1">
    <source>
        <dbReference type="HAMAP-Rule" id="MF_01365"/>
    </source>
</evidence>
<evidence type="ECO:0000305" key="2"/>
<keyword id="KW-0687">Ribonucleoprotein</keyword>
<keyword id="KW-0689">Ribosomal protein</keyword>
<keyword id="KW-0694">RNA-binding</keyword>
<keyword id="KW-0699">rRNA-binding</keyword>
<name>RL6_METPB</name>
<sequence>MSRVGKKPVPVPSGVTATVTGQTVKMKGSKGELQFVVPPQVIVEFKDGAVSVQPKDQSKQARSLWGTSRAQVANLVEGVSKGFEKKLEITGVGYRAAMAGKALKLSLGYSHDIEYEIPAGITIVTPKPTEIVVSGIDRQRVGQVAAEIREYRGPEPYKGKGVKYAGEFIFRKEGKKK</sequence>
<proteinExistence type="inferred from homology"/>
<organism>
    <name type="scientific">Methylorubrum populi (strain ATCC BAA-705 / NCIMB 13946 / BJ001)</name>
    <name type="common">Methylobacterium populi</name>
    <dbReference type="NCBI Taxonomy" id="441620"/>
    <lineage>
        <taxon>Bacteria</taxon>
        <taxon>Pseudomonadati</taxon>
        <taxon>Pseudomonadota</taxon>
        <taxon>Alphaproteobacteria</taxon>
        <taxon>Hyphomicrobiales</taxon>
        <taxon>Methylobacteriaceae</taxon>
        <taxon>Methylorubrum</taxon>
    </lineage>
</organism>
<protein>
    <recommendedName>
        <fullName evidence="1">Large ribosomal subunit protein uL6</fullName>
    </recommendedName>
    <alternativeName>
        <fullName evidence="2">50S ribosomal protein L6</fullName>
    </alternativeName>
</protein>
<feature type="chain" id="PRO_1000144015" description="Large ribosomal subunit protein uL6">
    <location>
        <begin position="1"/>
        <end position="177"/>
    </location>
</feature>
<accession>B1Z778</accession>